<proteinExistence type="inferred from homology"/>
<sequence>MVSQDFSREKRLLTPRHFKAVFDSPTGKVPGKNLLILARENGLDHPRLGLVIGKKSVKLAVQRNRLKRLMRDSFRLNQQLLAGLDIVIVARKGLGEIENPELHQHFGKLWKRLARSRPTPAVTANSAGVDSQDA</sequence>
<feature type="chain" id="PRO_1000058753" description="Ribonuclease P protein component">
    <location>
        <begin position="1"/>
        <end position="134"/>
    </location>
</feature>
<organism>
    <name type="scientific">Pseudomonas putida (strain ATCC 700007 / DSM 6899 / JCM 31910 / BCRC 17059 / LMG 24140 / F1)</name>
    <dbReference type="NCBI Taxonomy" id="351746"/>
    <lineage>
        <taxon>Bacteria</taxon>
        <taxon>Pseudomonadati</taxon>
        <taxon>Pseudomonadota</taxon>
        <taxon>Gammaproteobacteria</taxon>
        <taxon>Pseudomonadales</taxon>
        <taxon>Pseudomonadaceae</taxon>
        <taxon>Pseudomonas</taxon>
    </lineage>
</organism>
<evidence type="ECO:0000255" key="1">
    <source>
        <dbReference type="HAMAP-Rule" id="MF_00227"/>
    </source>
</evidence>
<dbReference type="EC" id="3.1.26.5" evidence="1"/>
<dbReference type="EMBL" id="CP000712">
    <property type="protein sequence ID" value="ABQ81429.1"/>
    <property type="molecule type" value="Genomic_DNA"/>
</dbReference>
<dbReference type="SMR" id="A5WBB9"/>
<dbReference type="KEGG" id="ppf:Pput_5311"/>
<dbReference type="eggNOG" id="COG0594">
    <property type="taxonomic scope" value="Bacteria"/>
</dbReference>
<dbReference type="HOGENOM" id="CLU_117179_11_0_6"/>
<dbReference type="GO" id="GO:0030677">
    <property type="term" value="C:ribonuclease P complex"/>
    <property type="evidence" value="ECO:0007669"/>
    <property type="project" value="TreeGrafter"/>
</dbReference>
<dbReference type="GO" id="GO:0042781">
    <property type="term" value="F:3'-tRNA processing endoribonuclease activity"/>
    <property type="evidence" value="ECO:0007669"/>
    <property type="project" value="TreeGrafter"/>
</dbReference>
<dbReference type="GO" id="GO:0004526">
    <property type="term" value="F:ribonuclease P activity"/>
    <property type="evidence" value="ECO:0007669"/>
    <property type="project" value="UniProtKB-UniRule"/>
</dbReference>
<dbReference type="GO" id="GO:0000049">
    <property type="term" value="F:tRNA binding"/>
    <property type="evidence" value="ECO:0007669"/>
    <property type="project" value="UniProtKB-UniRule"/>
</dbReference>
<dbReference type="GO" id="GO:0001682">
    <property type="term" value="P:tRNA 5'-leader removal"/>
    <property type="evidence" value="ECO:0007669"/>
    <property type="project" value="UniProtKB-UniRule"/>
</dbReference>
<dbReference type="Gene3D" id="3.30.230.10">
    <property type="match status" value="1"/>
</dbReference>
<dbReference type="HAMAP" id="MF_00227">
    <property type="entry name" value="RNase_P"/>
    <property type="match status" value="1"/>
</dbReference>
<dbReference type="InterPro" id="IPR020568">
    <property type="entry name" value="Ribosomal_Su5_D2-typ_SF"/>
</dbReference>
<dbReference type="InterPro" id="IPR014721">
    <property type="entry name" value="Ribsml_uS5_D2-typ_fold_subgr"/>
</dbReference>
<dbReference type="InterPro" id="IPR000100">
    <property type="entry name" value="RNase_P"/>
</dbReference>
<dbReference type="InterPro" id="IPR020539">
    <property type="entry name" value="RNase_P_CS"/>
</dbReference>
<dbReference type="NCBIfam" id="TIGR00188">
    <property type="entry name" value="rnpA"/>
    <property type="match status" value="1"/>
</dbReference>
<dbReference type="PANTHER" id="PTHR33992">
    <property type="entry name" value="RIBONUCLEASE P PROTEIN COMPONENT"/>
    <property type="match status" value="1"/>
</dbReference>
<dbReference type="PANTHER" id="PTHR33992:SF1">
    <property type="entry name" value="RIBONUCLEASE P PROTEIN COMPONENT"/>
    <property type="match status" value="1"/>
</dbReference>
<dbReference type="Pfam" id="PF00825">
    <property type="entry name" value="Ribonuclease_P"/>
    <property type="match status" value="1"/>
</dbReference>
<dbReference type="SUPFAM" id="SSF54211">
    <property type="entry name" value="Ribosomal protein S5 domain 2-like"/>
    <property type="match status" value="1"/>
</dbReference>
<dbReference type="PROSITE" id="PS00648">
    <property type="entry name" value="RIBONUCLEASE_P"/>
    <property type="match status" value="1"/>
</dbReference>
<keyword id="KW-0255">Endonuclease</keyword>
<keyword id="KW-0378">Hydrolase</keyword>
<keyword id="KW-0540">Nuclease</keyword>
<keyword id="KW-0694">RNA-binding</keyword>
<keyword id="KW-0819">tRNA processing</keyword>
<gene>
    <name evidence="1" type="primary">rnpA</name>
    <name type="ordered locus">Pput_5311</name>
</gene>
<protein>
    <recommendedName>
        <fullName evidence="1">Ribonuclease P protein component</fullName>
        <shortName evidence="1">RNase P protein</shortName>
        <shortName evidence="1">RNaseP protein</shortName>
        <ecNumber evidence="1">3.1.26.5</ecNumber>
    </recommendedName>
    <alternativeName>
        <fullName evidence="1">Protein C5</fullName>
    </alternativeName>
</protein>
<reference key="1">
    <citation type="submission" date="2007-05" db="EMBL/GenBank/DDBJ databases">
        <title>Complete sequence of Pseudomonas putida F1.</title>
        <authorList>
            <consortium name="US DOE Joint Genome Institute"/>
            <person name="Copeland A."/>
            <person name="Lucas S."/>
            <person name="Lapidus A."/>
            <person name="Barry K."/>
            <person name="Detter J.C."/>
            <person name="Glavina del Rio T."/>
            <person name="Hammon N."/>
            <person name="Israni S."/>
            <person name="Dalin E."/>
            <person name="Tice H."/>
            <person name="Pitluck S."/>
            <person name="Chain P."/>
            <person name="Malfatti S."/>
            <person name="Shin M."/>
            <person name="Vergez L."/>
            <person name="Schmutz J."/>
            <person name="Larimer F."/>
            <person name="Land M."/>
            <person name="Hauser L."/>
            <person name="Kyrpides N."/>
            <person name="Lykidis A."/>
            <person name="Parales R."/>
            <person name="Richardson P."/>
        </authorList>
    </citation>
    <scope>NUCLEOTIDE SEQUENCE [LARGE SCALE GENOMIC DNA]</scope>
    <source>
        <strain>ATCC 700007 / DSM 6899 / JCM 31910 / BCRC 17059 / LMG 24140 / F1</strain>
    </source>
</reference>
<accession>A5WBB9</accession>
<comment type="function">
    <text evidence="1">RNaseP catalyzes the removal of the 5'-leader sequence from pre-tRNA to produce the mature 5'-terminus. It can also cleave other RNA substrates such as 4.5S RNA. The protein component plays an auxiliary but essential role in vivo by binding to the 5'-leader sequence and broadening the substrate specificity of the ribozyme.</text>
</comment>
<comment type="catalytic activity">
    <reaction evidence="1">
        <text>Endonucleolytic cleavage of RNA, removing 5'-extranucleotides from tRNA precursor.</text>
        <dbReference type="EC" id="3.1.26.5"/>
    </reaction>
</comment>
<comment type="subunit">
    <text evidence="1">Consists of a catalytic RNA component (M1 or rnpB) and a protein subunit.</text>
</comment>
<comment type="similarity">
    <text evidence="1">Belongs to the RnpA family.</text>
</comment>
<name>RNPA_PSEP1</name>